<keyword id="KW-0067">ATP-binding</keyword>
<keyword id="KW-0963">Cytoplasm</keyword>
<keyword id="KW-0227">DNA damage</keyword>
<keyword id="KW-0233">DNA recombination</keyword>
<keyword id="KW-0234">DNA repair</keyword>
<keyword id="KW-0238">DNA-binding</keyword>
<keyword id="KW-0378">Hydrolase</keyword>
<keyword id="KW-0547">Nucleotide-binding</keyword>
<name>RUVB2_SYNJA</name>
<dbReference type="EC" id="3.6.4.-" evidence="1"/>
<dbReference type="EMBL" id="CP000239">
    <property type="protein sequence ID" value="ABD00001.1"/>
    <property type="molecule type" value="Genomic_DNA"/>
</dbReference>
<dbReference type="RefSeq" id="WP_011430676.1">
    <property type="nucleotide sequence ID" value="NC_007775.1"/>
</dbReference>
<dbReference type="SMR" id="Q2JTJ1"/>
<dbReference type="STRING" id="321327.CYA_1850"/>
<dbReference type="KEGG" id="cya:CYA_1850"/>
<dbReference type="eggNOG" id="COG2255">
    <property type="taxonomic scope" value="Bacteria"/>
</dbReference>
<dbReference type="HOGENOM" id="CLU_055599_1_0_3"/>
<dbReference type="OrthoDB" id="9804478at2"/>
<dbReference type="Proteomes" id="UP000008818">
    <property type="component" value="Chromosome"/>
</dbReference>
<dbReference type="GO" id="GO:0005737">
    <property type="term" value="C:cytoplasm"/>
    <property type="evidence" value="ECO:0007669"/>
    <property type="project" value="UniProtKB-SubCell"/>
</dbReference>
<dbReference type="GO" id="GO:0048476">
    <property type="term" value="C:Holliday junction resolvase complex"/>
    <property type="evidence" value="ECO:0007669"/>
    <property type="project" value="UniProtKB-UniRule"/>
</dbReference>
<dbReference type="GO" id="GO:0005524">
    <property type="term" value="F:ATP binding"/>
    <property type="evidence" value="ECO:0007669"/>
    <property type="project" value="UniProtKB-UniRule"/>
</dbReference>
<dbReference type="GO" id="GO:0016887">
    <property type="term" value="F:ATP hydrolysis activity"/>
    <property type="evidence" value="ECO:0007669"/>
    <property type="project" value="InterPro"/>
</dbReference>
<dbReference type="GO" id="GO:0000400">
    <property type="term" value="F:four-way junction DNA binding"/>
    <property type="evidence" value="ECO:0007669"/>
    <property type="project" value="UniProtKB-UniRule"/>
</dbReference>
<dbReference type="GO" id="GO:0009378">
    <property type="term" value="F:four-way junction helicase activity"/>
    <property type="evidence" value="ECO:0007669"/>
    <property type="project" value="InterPro"/>
</dbReference>
<dbReference type="GO" id="GO:0006310">
    <property type="term" value="P:DNA recombination"/>
    <property type="evidence" value="ECO:0007669"/>
    <property type="project" value="UniProtKB-UniRule"/>
</dbReference>
<dbReference type="GO" id="GO:0006281">
    <property type="term" value="P:DNA repair"/>
    <property type="evidence" value="ECO:0007669"/>
    <property type="project" value="UniProtKB-UniRule"/>
</dbReference>
<dbReference type="CDD" id="cd00009">
    <property type="entry name" value="AAA"/>
    <property type="match status" value="1"/>
</dbReference>
<dbReference type="Gene3D" id="1.10.8.60">
    <property type="match status" value="1"/>
</dbReference>
<dbReference type="Gene3D" id="3.40.50.300">
    <property type="entry name" value="P-loop containing nucleotide triphosphate hydrolases"/>
    <property type="match status" value="1"/>
</dbReference>
<dbReference type="Gene3D" id="1.10.10.10">
    <property type="entry name" value="Winged helix-like DNA-binding domain superfamily/Winged helix DNA-binding domain"/>
    <property type="match status" value="1"/>
</dbReference>
<dbReference type="HAMAP" id="MF_00016">
    <property type="entry name" value="DNA_HJ_migration_RuvB"/>
    <property type="match status" value="1"/>
</dbReference>
<dbReference type="InterPro" id="IPR003593">
    <property type="entry name" value="AAA+_ATPase"/>
</dbReference>
<dbReference type="InterPro" id="IPR041445">
    <property type="entry name" value="AAA_lid_4"/>
</dbReference>
<dbReference type="InterPro" id="IPR004605">
    <property type="entry name" value="DNA_helicase_Holl-junc_RuvB"/>
</dbReference>
<dbReference type="InterPro" id="IPR027417">
    <property type="entry name" value="P-loop_NTPase"/>
</dbReference>
<dbReference type="InterPro" id="IPR008824">
    <property type="entry name" value="RuvB-like_N"/>
</dbReference>
<dbReference type="InterPro" id="IPR008823">
    <property type="entry name" value="RuvB_C"/>
</dbReference>
<dbReference type="InterPro" id="IPR036388">
    <property type="entry name" value="WH-like_DNA-bd_sf"/>
</dbReference>
<dbReference type="InterPro" id="IPR036390">
    <property type="entry name" value="WH_DNA-bd_sf"/>
</dbReference>
<dbReference type="NCBIfam" id="NF000868">
    <property type="entry name" value="PRK00080.1"/>
    <property type="match status" value="1"/>
</dbReference>
<dbReference type="NCBIfam" id="TIGR00635">
    <property type="entry name" value="ruvB"/>
    <property type="match status" value="1"/>
</dbReference>
<dbReference type="PANTHER" id="PTHR42848">
    <property type="match status" value="1"/>
</dbReference>
<dbReference type="PANTHER" id="PTHR42848:SF1">
    <property type="entry name" value="HOLLIDAY JUNCTION BRANCH MIGRATION COMPLEX SUBUNIT RUVB"/>
    <property type="match status" value="1"/>
</dbReference>
<dbReference type="Pfam" id="PF17864">
    <property type="entry name" value="AAA_lid_4"/>
    <property type="match status" value="1"/>
</dbReference>
<dbReference type="Pfam" id="PF05491">
    <property type="entry name" value="RuvB_C"/>
    <property type="match status" value="1"/>
</dbReference>
<dbReference type="Pfam" id="PF05496">
    <property type="entry name" value="RuvB_N"/>
    <property type="match status" value="1"/>
</dbReference>
<dbReference type="SMART" id="SM00382">
    <property type="entry name" value="AAA"/>
    <property type="match status" value="1"/>
</dbReference>
<dbReference type="SUPFAM" id="SSF52540">
    <property type="entry name" value="P-loop containing nucleoside triphosphate hydrolases"/>
    <property type="match status" value="1"/>
</dbReference>
<dbReference type="SUPFAM" id="SSF46785">
    <property type="entry name" value="Winged helix' DNA-binding domain"/>
    <property type="match status" value="1"/>
</dbReference>
<evidence type="ECO:0000255" key="1">
    <source>
        <dbReference type="HAMAP-Rule" id="MF_00016"/>
    </source>
</evidence>
<evidence type="ECO:0000256" key="2">
    <source>
        <dbReference type="SAM" id="MobiDB-lite"/>
    </source>
</evidence>
<accession>Q2JTJ1</accession>
<gene>
    <name evidence="1" type="primary">ruvB2</name>
    <name type="synonym">ruvB-2</name>
    <name type="ordered locus">CYA_1850</name>
</gene>
<protein>
    <recommendedName>
        <fullName evidence="1">Holliday junction branch migration complex subunit RuvB 2</fullName>
        <ecNumber evidence="1">3.6.4.-</ecNumber>
    </recommendedName>
</protein>
<feature type="chain" id="PRO_0000235420" description="Holliday junction branch migration complex subunit RuvB 2">
    <location>
        <begin position="1"/>
        <end position="370"/>
    </location>
</feature>
<feature type="region of interest" description="Disordered" evidence="2">
    <location>
        <begin position="1"/>
        <end position="54"/>
    </location>
</feature>
<feature type="region of interest" description="Large ATPase domain (RuvB-L)" evidence="1">
    <location>
        <begin position="13"/>
        <end position="214"/>
    </location>
</feature>
<feature type="region of interest" description="Small ATPAse domain (RuvB-S)" evidence="1">
    <location>
        <begin position="215"/>
        <end position="285"/>
    </location>
</feature>
<feature type="region of interest" description="Head domain (RuvB-H)" evidence="1">
    <location>
        <begin position="288"/>
        <end position="370"/>
    </location>
</feature>
<feature type="binding site" evidence="1">
    <location>
        <position position="53"/>
    </location>
    <ligand>
        <name>ATP</name>
        <dbReference type="ChEBI" id="CHEBI:30616"/>
    </ligand>
</feature>
<feature type="binding site" evidence="1">
    <location>
        <position position="54"/>
    </location>
    <ligand>
        <name>ATP</name>
        <dbReference type="ChEBI" id="CHEBI:30616"/>
    </ligand>
</feature>
<feature type="binding site" evidence="1">
    <location>
        <position position="95"/>
    </location>
    <ligand>
        <name>ATP</name>
        <dbReference type="ChEBI" id="CHEBI:30616"/>
    </ligand>
</feature>
<feature type="binding site" evidence="1">
    <location>
        <position position="98"/>
    </location>
    <ligand>
        <name>ATP</name>
        <dbReference type="ChEBI" id="CHEBI:30616"/>
    </ligand>
</feature>
<feature type="binding site" evidence="1">
    <location>
        <position position="99"/>
    </location>
    <ligand>
        <name>ATP</name>
        <dbReference type="ChEBI" id="CHEBI:30616"/>
    </ligand>
</feature>
<feature type="binding site" evidence="1">
    <location>
        <position position="99"/>
    </location>
    <ligand>
        <name>Mg(2+)</name>
        <dbReference type="ChEBI" id="CHEBI:18420"/>
    </ligand>
</feature>
<feature type="binding site" evidence="1">
    <location>
        <position position="100"/>
    </location>
    <ligand>
        <name>ATP</name>
        <dbReference type="ChEBI" id="CHEBI:30616"/>
    </ligand>
</feature>
<feature type="binding site" evidence="1">
    <location>
        <begin position="161"/>
        <end position="163"/>
    </location>
    <ligand>
        <name>ATP</name>
        <dbReference type="ChEBI" id="CHEBI:30616"/>
    </ligand>
</feature>
<feature type="binding site" evidence="1">
    <location>
        <position position="204"/>
    </location>
    <ligand>
        <name>ATP</name>
        <dbReference type="ChEBI" id="CHEBI:30616"/>
    </ligand>
</feature>
<feature type="binding site" evidence="1">
    <location>
        <position position="214"/>
    </location>
    <ligand>
        <name>ATP</name>
        <dbReference type="ChEBI" id="CHEBI:30616"/>
    </ligand>
</feature>
<feature type="binding site" evidence="1">
    <location>
        <position position="251"/>
    </location>
    <ligand>
        <name>ATP</name>
        <dbReference type="ChEBI" id="CHEBI:30616"/>
    </ligand>
</feature>
<feature type="binding site" evidence="1">
    <location>
        <position position="343"/>
    </location>
    <ligand>
        <name>DNA</name>
        <dbReference type="ChEBI" id="CHEBI:16991"/>
    </ligand>
</feature>
<feature type="binding site" evidence="1">
    <location>
        <position position="348"/>
    </location>
    <ligand>
        <name>DNA</name>
        <dbReference type="ChEBI" id="CHEBI:16991"/>
    </ligand>
</feature>
<sequence length="370" mass="40895">MAIISSRAAGAEDPGQRQQKSSARRRESKLAFARAEGLLQPQAHPSEAQEESLRPRTLAEYIGQTELKEVLSIAIAAARARGEPLDHLLFYGPPGLGKTTVAAVLAAEMGSRFYMTTAPALESPRDIAGYLVRLKQGDVLFIDEIHRLPKVTEELLYPAMEDFRLDITVGKGRSARITSIPLERFTLIGATTRIGALTSPLRDRFGQVQRLRFYEPHELAEIVLRSARLLNTSIDRAGAEEIARRSRGTPRIANRLLKRVRDYAQVRGDGHISREVAAAALELFQVDPMGLDWTDRKLLTVLVEQFGGGPVGLETMAAVTGEDPQTIEEVYEPYLLQIGYLQRTPRGRVVTPAALQHLGYTAQSPLPVWS</sequence>
<reference key="1">
    <citation type="journal article" date="2007" name="ISME J.">
        <title>Population level functional diversity in a microbial community revealed by comparative genomic and metagenomic analyses.</title>
        <authorList>
            <person name="Bhaya D."/>
            <person name="Grossman A.R."/>
            <person name="Steunou A.-S."/>
            <person name="Khuri N."/>
            <person name="Cohan F.M."/>
            <person name="Hamamura N."/>
            <person name="Melendrez M.C."/>
            <person name="Bateson M.M."/>
            <person name="Ward D.M."/>
            <person name="Heidelberg J.F."/>
        </authorList>
    </citation>
    <scope>NUCLEOTIDE SEQUENCE [LARGE SCALE GENOMIC DNA]</scope>
    <source>
        <strain>JA-3-3Ab</strain>
    </source>
</reference>
<comment type="function">
    <text evidence="1">The RuvA-RuvB-RuvC complex processes Holliday junction (HJ) DNA during genetic recombination and DNA repair, while the RuvA-RuvB complex plays an important role in the rescue of blocked DNA replication forks via replication fork reversal (RFR). RuvA specifically binds to HJ cruciform DNA, conferring on it an open structure. The RuvB hexamer acts as an ATP-dependent pump, pulling dsDNA into and through the RuvAB complex. RuvB forms 2 homohexamers on either side of HJ DNA bound by 1 or 2 RuvA tetramers; 4 subunits per hexamer contact DNA at a time. Coordinated motions by a converter formed by DNA-disengaged RuvB subunits stimulates ATP hydrolysis and nucleotide exchange. Immobilization of the converter enables RuvB to convert the ATP-contained energy into a lever motion, pulling 2 nucleotides of DNA out of the RuvA tetramer per ATP hydrolyzed, thus driving DNA branch migration. The RuvB motors rotate together with the DNA substrate, which together with the progressing nucleotide cycle form the mechanistic basis for DNA recombination by continuous HJ branch migration. Branch migration allows RuvC to scan DNA until it finds its consensus sequence, where it cleaves and resolves cruciform DNA.</text>
</comment>
<comment type="catalytic activity">
    <reaction evidence="1">
        <text>ATP + H2O = ADP + phosphate + H(+)</text>
        <dbReference type="Rhea" id="RHEA:13065"/>
        <dbReference type="ChEBI" id="CHEBI:15377"/>
        <dbReference type="ChEBI" id="CHEBI:15378"/>
        <dbReference type="ChEBI" id="CHEBI:30616"/>
        <dbReference type="ChEBI" id="CHEBI:43474"/>
        <dbReference type="ChEBI" id="CHEBI:456216"/>
    </reaction>
</comment>
<comment type="subunit">
    <text evidence="1">Homohexamer. Forms an RuvA(8)-RuvB(12)-Holliday junction (HJ) complex. HJ DNA is sandwiched between 2 RuvA tetramers; dsDNA enters through RuvA and exits via RuvB. An RuvB hexamer assembles on each DNA strand where it exits the tetramer. Each RuvB hexamer is contacted by two RuvA subunits (via domain III) on 2 adjacent RuvB subunits; this complex drives branch migration. In the full resolvosome a probable DNA-RuvA(4)-RuvB(12)-RuvC(2) complex forms which resolves the HJ.</text>
</comment>
<comment type="subcellular location">
    <subcellularLocation>
        <location evidence="1">Cytoplasm</location>
    </subcellularLocation>
</comment>
<comment type="domain">
    <text evidence="1">Has 3 domains, the large (RuvB-L) and small ATPase (RuvB-S) domains and the C-terminal head (RuvB-H) domain. The head domain binds DNA, while the ATPase domains jointly bind ATP, ADP or are empty depending on the state of the subunit in the translocation cycle. During a single DNA translocation step the structure of each domain remains the same, but their relative positions change.</text>
</comment>
<comment type="similarity">
    <text evidence="1">Belongs to the RuvB family.</text>
</comment>
<proteinExistence type="inferred from homology"/>
<organism>
    <name type="scientific">Synechococcus sp. (strain JA-3-3Ab)</name>
    <name type="common">Cyanobacteria bacterium Yellowstone A-Prime</name>
    <dbReference type="NCBI Taxonomy" id="321327"/>
    <lineage>
        <taxon>Bacteria</taxon>
        <taxon>Bacillati</taxon>
        <taxon>Cyanobacteriota</taxon>
        <taxon>Cyanophyceae</taxon>
        <taxon>Synechococcales</taxon>
        <taxon>Synechococcaceae</taxon>
        <taxon>Synechococcus</taxon>
    </lineage>
</organism>